<keyword id="KW-1185">Reference proteome</keyword>
<protein>
    <recommendedName>
        <fullName>Uncharacterized protein p4</fullName>
    </recommendedName>
</protein>
<dbReference type="EMBL" id="AF296442">
    <property type="protein sequence ID" value="AAM95604.1"/>
    <property type="molecule type" value="Genomic_RNA"/>
</dbReference>
<dbReference type="RefSeq" id="YP_392485.1">
    <property type="nucleotide sequence ID" value="NC_007542.1"/>
</dbReference>
<dbReference type="SMR" id="Q8JVB9"/>
<dbReference type="KEGG" id="vg:5075915"/>
<dbReference type="Proteomes" id="UP000006714">
    <property type="component" value="Genome"/>
</dbReference>
<proteinExistence type="predicted"/>
<organism>
    <name type="scientific">Penicillium chrysogenum virus (isolate Caston/2003)</name>
    <name type="common">PcV</name>
    <dbReference type="NCBI Taxonomy" id="654932"/>
    <lineage>
        <taxon>Viruses</taxon>
        <taxon>Riboviria</taxon>
        <taxon>Orthornavirae</taxon>
        <taxon>Duplornaviricota</taxon>
        <taxon>Chrymotiviricetes</taxon>
        <taxon>Ghabrivirales</taxon>
        <taxon>Chrysoviridae</taxon>
        <taxon>Alphachrysovirus</taxon>
        <taxon>Alphachrysovirus penicillii</taxon>
    </lineage>
</organism>
<feature type="chain" id="PRO_0000404267" description="Uncharacterized protein p4">
    <location>
        <begin position="1"/>
        <end position="847"/>
    </location>
</feature>
<accession>Q8JVB9</accession>
<name>P4_PCVC</name>
<reference key="1">
    <citation type="journal article" date="2003" name="J. Mol. Biol.">
        <title>Three-dimensional structure of penicillium chrysogenum virus: a double-stranded RNA virus with a genuine T=1 capsid.</title>
        <authorList>
            <person name="Caston J.R."/>
            <person name="Ghabrial S.A."/>
            <person name="Jiang D."/>
            <person name="Rivas G."/>
            <person name="Alfonso C."/>
            <person name="Roca R."/>
            <person name="Luque D."/>
            <person name="Carrascosa J.L."/>
        </authorList>
    </citation>
    <scope>NUCLEOTIDE SEQUENCE [GENOMIC RNA]</scope>
</reference>
<reference key="2">
    <citation type="journal article" date="2004" name="J. Gen. Virol.">
        <title>Molecular characterization of Penicillium chrysogenum virus: reconsideration of the taxonomy of the genus Chrysovirus.</title>
        <authorList>
            <person name="Jiang D."/>
            <person name="Ghabrial S.A."/>
        </authorList>
    </citation>
    <scope>NUCLEOTIDE SEQUENCE [GENOMIC RNA]</scope>
</reference>
<organismHost>
    <name type="scientific">Penicillium chrysogenum</name>
    <name type="common">Penicillium notatum</name>
    <dbReference type="NCBI Taxonomy" id="5076"/>
</organismHost>
<gene>
    <name type="primary">p4</name>
</gene>
<sequence length="847" mass="94900">MAAEARVIDYMKGLPQSYQHRETYFEQFLEQNSERLVEEIDGPVVEKGLISDGEKEIIRHLNVQDKFTINGFRKSVKICHMVSLGATRQTKRTGTTELDFMGAGPWTLYPSSARALYSSKESTVHLVDEAQRRMIMSKCPTMAGPTSTGTYMAAIHERLSTPSDLRHLFTKMVLYLYDYTLAVVSKDNTMHTADDISFDLRPHLPSDALLATVINHDMVIDGDLFTPEQISLLCLAGQQYPSVWYAGEGNIYNSCNMVADDLVVVSSGRLTTDSAFTWGSPDKLYNMMWTIAQKLNGVSCLMYALESMRGKCKMMSDIVAKTDCREVNAMIPRSYCMSTAFGQIREKQIVVKMPGYFSTSIGMLSDLMYGMTFKAVASCVAETLGAMGTIVSSSTPRTNPTINGLMRDYGLQHTNAWDNFMLRNFEMVTRRPTQWDIGQHMKEYALALAEHVMLGYDIEMPSILLTIPALTAVNTAYGLTRGWYGGGSTLDMDKKQRKESTDALCAVGWMCGLRQCRPQVFRNRAGKKQVMVNAAERKLRAEAGDDCRIRDVEFWLEDTPGGRVDENEESAPNLYKTEFSGTKCAMVFNYEMGMWIEARQMDYDRLKRETFSGDLTKKERYTMSKVSAMPIHWGPPPNHKAKLEASLEHMKSISRGNAIVPTREPKHVRINSQSMAVVPKYVKDGVEEEKYVHYERPAIEEGDTIRFSEIDVPGDGSCGIHAMVKDLTVHGRLSPHEAAKATELFSTDTASKKFHDAAELAAQCQLWGMGMDLIDKGSNRVTRYGPEDSEYSITIIRDGGHFRAGLIGEGANEMTVEHLEQQTRAPEEFVRDVKSLGSLFGGSPILQ</sequence>